<dbReference type="EMBL" id="AE017220">
    <property type="protein sequence ID" value="AAX65022.1"/>
    <property type="molecule type" value="Genomic_DNA"/>
</dbReference>
<dbReference type="RefSeq" id="WP_000873046.1">
    <property type="nucleotide sequence ID" value="NC_006905.1"/>
</dbReference>
<dbReference type="SMR" id="Q57QI9"/>
<dbReference type="KEGG" id="sec:SCH_1116"/>
<dbReference type="HOGENOM" id="CLU_057831_2_0_6"/>
<dbReference type="Proteomes" id="UP000000538">
    <property type="component" value="Chromosome"/>
</dbReference>
<dbReference type="FunFam" id="1.10.10.10:FF:000196">
    <property type="entry name" value="UPF0502 protein YceH"/>
    <property type="match status" value="1"/>
</dbReference>
<dbReference type="Gene3D" id="1.10.10.10">
    <property type="entry name" value="Winged helix-like DNA-binding domain superfamily/Winged helix DNA-binding domain"/>
    <property type="match status" value="2"/>
</dbReference>
<dbReference type="HAMAP" id="MF_01584">
    <property type="entry name" value="UPF0502"/>
    <property type="match status" value="1"/>
</dbReference>
<dbReference type="InterPro" id="IPR007432">
    <property type="entry name" value="DUF480"/>
</dbReference>
<dbReference type="InterPro" id="IPR036388">
    <property type="entry name" value="WH-like_DNA-bd_sf"/>
</dbReference>
<dbReference type="InterPro" id="IPR036390">
    <property type="entry name" value="WH_DNA-bd_sf"/>
</dbReference>
<dbReference type="NCBIfam" id="NF008413">
    <property type="entry name" value="PRK11239.1"/>
    <property type="match status" value="1"/>
</dbReference>
<dbReference type="PANTHER" id="PTHR38768">
    <property type="entry name" value="UPF0502 PROTEIN YCEH"/>
    <property type="match status" value="1"/>
</dbReference>
<dbReference type="PANTHER" id="PTHR38768:SF1">
    <property type="entry name" value="UPF0502 PROTEIN YCEH"/>
    <property type="match status" value="1"/>
</dbReference>
<dbReference type="Pfam" id="PF04337">
    <property type="entry name" value="DUF480"/>
    <property type="match status" value="1"/>
</dbReference>
<dbReference type="SUPFAM" id="SSF46785">
    <property type="entry name" value="Winged helix' DNA-binding domain"/>
    <property type="match status" value="2"/>
</dbReference>
<evidence type="ECO:0000255" key="1">
    <source>
        <dbReference type="HAMAP-Rule" id="MF_01584"/>
    </source>
</evidence>
<proteinExistence type="inferred from homology"/>
<sequence length="215" mass="24120">MKYELTATEARVIGCLLEKQVTTPEQYPLSVNGVVTACNQKTNREPVMNLTEQEVQEQLDNLVKRHFLRTVSGFGNRVTKYEQRFCNSEFGDLKLSAAEVALVTTLLLRGAQTPGELRSRASRMHEFSDMAEVESTLERLASREDGPYVVRLAREPGKRESRYMHLFCGDVDELSLQTSAPESASGDIQSRVEALESEVAELKQRLDSLLAHLGE</sequence>
<gene>
    <name evidence="1" type="primary">yceH</name>
    <name type="ordered locus">SCH_1116</name>
</gene>
<reference key="1">
    <citation type="journal article" date="2005" name="Nucleic Acids Res.">
        <title>The genome sequence of Salmonella enterica serovar Choleraesuis, a highly invasive and resistant zoonotic pathogen.</title>
        <authorList>
            <person name="Chiu C.-H."/>
            <person name="Tang P."/>
            <person name="Chu C."/>
            <person name="Hu S."/>
            <person name="Bao Q."/>
            <person name="Yu J."/>
            <person name="Chou Y.-Y."/>
            <person name="Wang H.-S."/>
            <person name="Lee Y.-S."/>
        </authorList>
    </citation>
    <scope>NUCLEOTIDE SEQUENCE [LARGE SCALE GENOMIC DNA]</scope>
    <source>
        <strain>SC-B67</strain>
    </source>
</reference>
<feature type="chain" id="PRO_0000309419" description="UPF0502 protein YceH">
    <location>
        <begin position="1"/>
        <end position="215"/>
    </location>
</feature>
<name>YCEH_SALCH</name>
<accession>Q57QI9</accession>
<protein>
    <recommendedName>
        <fullName evidence="1">UPF0502 protein YceH</fullName>
    </recommendedName>
</protein>
<organism>
    <name type="scientific">Salmonella choleraesuis (strain SC-B67)</name>
    <dbReference type="NCBI Taxonomy" id="321314"/>
    <lineage>
        <taxon>Bacteria</taxon>
        <taxon>Pseudomonadati</taxon>
        <taxon>Pseudomonadota</taxon>
        <taxon>Gammaproteobacteria</taxon>
        <taxon>Enterobacterales</taxon>
        <taxon>Enterobacteriaceae</taxon>
        <taxon>Salmonella</taxon>
    </lineage>
</organism>
<comment type="similarity">
    <text evidence="1">Belongs to the UPF0502 family.</text>
</comment>